<dbReference type="EC" id="2.1.1.172" evidence="1"/>
<dbReference type="EMBL" id="FM178379">
    <property type="protein sequence ID" value="CAQ80258.1"/>
    <property type="status" value="ALT_INIT"/>
    <property type="molecule type" value="Genomic_DNA"/>
</dbReference>
<dbReference type="RefSeq" id="WP_044583325.1">
    <property type="nucleotide sequence ID" value="NC_011312.1"/>
</dbReference>
<dbReference type="SMR" id="B6EL06"/>
<dbReference type="KEGG" id="vsa:VSAL_I2574"/>
<dbReference type="eggNOG" id="COG2813">
    <property type="taxonomic scope" value="Bacteria"/>
</dbReference>
<dbReference type="HOGENOM" id="CLU_049581_0_1_6"/>
<dbReference type="Proteomes" id="UP000001730">
    <property type="component" value="Chromosome 1"/>
</dbReference>
<dbReference type="GO" id="GO:0005737">
    <property type="term" value="C:cytoplasm"/>
    <property type="evidence" value="ECO:0007669"/>
    <property type="project" value="UniProtKB-SubCell"/>
</dbReference>
<dbReference type="GO" id="GO:0052914">
    <property type="term" value="F:16S rRNA (guanine(1207)-N(2))-methyltransferase activity"/>
    <property type="evidence" value="ECO:0007669"/>
    <property type="project" value="UniProtKB-EC"/>
</dbReference>
<dbReference type="GO" id="GO:0003676">
    <property type="term" value="F:nucleic acid binding"/>
    <property type="evidence" value="ECO:0007669"/>
    <property type="project" value="InterPro"/>
</dbReference>
<dbReference type="CDD" id="cd02440">
    <property type="entry name" value="AdoMet_MTases"/>
    <property type="match status" value="1"/>
</dbReference>
<dbReference type="Gene3D" id="3.40.50.150">
    <property type="entry name" value="Vaccinia Virus protein VP39"/>
    <property type="match status" value="2"/>
</dbReference>
<dbReference type="HAMAP" id="MF_01862">
    <property type="entry name" value="16SrRNA_methyltr_C"/>
    <property type="match status" value="1"/>
</dbReference>
<dbReference type="InterPro" id="IPR002052">
    <property type="entry name" value="DNA_methylase_N6_adenine_CS"/>
</dbReference>
<dbReference type="InterPro" id="IPR013675">
    <property type="entry name" value="Mtase_sm_N"/>
</dbReference>
<dbReference type="InterPro" id="IPR023543">
    <property type="entry name" value="rRNA_ssu_MeTfrase_C"/>
</dbReference>
<dbReference type="InterPro" id="IPR046977">
    <property type="entry name" value="RsmC/RlmG"/>
</dbReference>
<dbReference type="InterPro" id="IPR029063">
    <property type="entry name" value="SAM-dependent_MTases_sf"/>
</dbReference>
<dbReference type="InterPro" id="IPR007848">
    <property type="entry name" value="Small_mtfrase_dom"/>
</dbReference>
<dbReference type="NCBIfam" id="NF007023">
    <property type="entry name" value="PRK09489.1"/>
    <property type="match status" value="1"/>
</dbReference>
<dbReference type="PANTHER" id="PTHR47816">
    <property type="entry name" value="RIBOSOMAL RNA SMALL SUBUNIT METHYLTRANSFERASE C"/>
    <property type="match status" value="1"/>
</dbReference>
<dbReference type="PANTHER" id="PTHR47816:SF4">
    <property type="entry name" value="RIBOSOMAL RNA SMALL SUBUNIT METHYLTRANSFERASE C"/>
    <property type="match status" value="1"/>
</dbReference>
<dbReference type="Pfam" id="PF05175">
    <property type="entry name" value="MTS"/>
    <property type="match status" value="1"/>
</dbReference>
<dbReference type="Pfam" id="PF08468">
    <property type="entry name" value="MTS_N"/>
    <property type="match status" value="1"/>
</dbReference>
<dbReference type="SUPFAM" id="SSF53335">
    <property type="entry name" value="S-adenosyl-L-methionine-dependent methyltransferases"/>
    <property type="match status" value="1"/>
</dbReference>
<feature type="chain" id="PRO_0000369688" description="Ribosomal RNA small subunit methyltransferase C">
    <location>
        <begin position="1"/>
        <end position="339"/>
    </location>
</feature>
<name>RSMC_ALISL</name>
<evidence type="ECO:0000255" key="1">
    <source>
        <dbReference type="HAMAP-Rule" id="MF_01862"/>
    </source>
</evidence>
<evidence type="ECO:0000305" key="2"/>
<keyword id="KW-0963">Cytoplasm</keyword>
<keyword id="KW-0489">Methyltransferase</keyword>
<keyword id="KW-0698">rRNA processing</keyword>
<keyword id="KW-0949">S-adenosyl-L-methionine</keyword>
<keyword id="KW-0808">Transferase</keyword>
<proteinExistence type="inferred from homology"/>
<organism>
    <name type="scientific">Aliivibrio salmonicida (strain LFI1238)</name>
    <name type="common">Vibrio salmonicida (strain LFI1238)</name>
    <dbReference type="NCBI Taxonomy" id="316275"/>
    <lineage>
        <taxon>Bacteria</taxon>
        <taxon>Pseudomonadati</taxon>
        <taxon>Pseudomonadota</taxon>
        <taxon>Gammaproteobacteria</taxon>
        <taxon>Vibrionales</taxon>
        <taxon>Vibrionaceae</taxon>
        <taxon>Aliivibrio</taxon>
    </lineage>
</organism>
<accession>B6EL06</accession>
<protein>
    <recommendedName>
        <fullName evidence="1">Ribosomal RNA small subunit methyltransferase C</fullName>
        <ecNumber evidence="1">2.1.1.172</ecNumber>
    </recommendedName>
    <alternativeName>
        <fullName evidence="1">16S rRNA m2G1207 methyltransferase</fullName>
    </alternativeName>
    <alternativeName>
        <fullName evidence="1">rRNA (guanine-N(2)-)-methyltransferase RsmC</fullName>
    </alternativeName>
</protein>
<comment type="function">
    <text evidence="1">Specifically methylates the guanine in position 1207 of 16S rRNA in the 30S particle.</text>
</comment>
<comment type="catalytic activity">
    <reaction evidence="1">
        <text>guanosine(1207) in 16S rRNA + S-adenosyl-L-methionine = N(2)-methylguanosine(1207) in 16S rRNA + S-adenosyl-L-homocysteine + H(+)</text>
        <dbReference type="Rhea" id="RHEA:42736"/>
        <dbReference type="Rhea" id="RHEA-COMP:10213"/>
        <dbReference type="Rhea" id="RHEA-COMP:10214"/>
        <dbReference type="ChEBI" id="CHEBI:15378"/>
        <dbReference type="ChEBI" id="CHEBI:57856"/>
        <dbReference type="ChEBI" id="CHEBI:59789"/>
        <dbReference type="ChEBI" id="CHEBI:74269"/>
        <dbReference type="ChEBI" id="CHEBI:74481"/>
        <dbReference type="EC" id="2.1.1.172"/>
    </reaction>
</comment>
<comment type="subunit">
    <text evidence="1">Monomer.</text>
</comment>
<comment type="subcellular location">
    <subcellularLocation>
        <location evidence="1">Cytoplasm</location>
    </subcellularLocation>
</comment>
<comment type="similarity">
    <text evidence="1">Belongs to the methyltransferase superfamily. RsmC family.</text>
</comment>
<comment type="sequence caution" evidence="2">
    <conflict type="erroneous initiation">
        <sequence resource="EMBL-CDS" id="CAQ80258"/>
    </conflict>
</comment>
<reference key="1">
    <citation type="journal article" date="2008" name="BMC Genomics">
        <title>The genome sequence of the fish pathogen Aliivibrio salmonicida strain LFI1238 shows extensive evidence of gene decay.</title>
        <authorList>
            <person name="Hjerde E."/>
            <person name="Lorentzen M.S."/>
            <person name="Holden M.T."/>
            <person name="Seeger K."/>
            <person name="Paulsen S."/>
            <person name="Bason N."/>
            <person name="Churcher C."/>
            <person name="Harris D."/>
            <person name="Norbertczak H."/>
            <person name="Quail M.A."/>
            <person name="Sanders S."/>
            <person name="Thurston S."/>
            <person name="Parkhill J."/>
            <person name="Willassen N.P."/>
            <person name="Thomson N.R."/>
        </authorList>
    </citation>
    <scope>NUCLEOTIDE SEQUENCE [LARGE SCALE GENOMIC DNA]</scope>
    <source>
        <strain>LFI1238</strain>
    </source>
</reference>
<gene>
    <name evidence="1" type="primary">rsmC</name>
    <name type="ordered locus">VSAL_I2574</name>
</gene>
<sequence length="339" mass="38127">MSYSAPSQITQRQLAYFEGKHVLIAGELNDNFPLELDKHCASTSIFTTNYGYYKQFSENPKINCYFGTELIEESHADMILLYWPKAKAEAEYLLTMLLAKLGKDTEIIVVGENRSGVKSVEKMFANFGPMNKLDSARRCSFYWGQCTETAPSFNLQDWFKEYQVQFKEHTIEVRSLPGVFSHGEFDKGSELLLQTLPSLRGHVLDFGCGAGVLGSVMKTINPKIHLDMVDISAFAIASSIETLKANGLEGNVFASDVYSDTKQNYQFIVSNPPFHAGLKTHYSSTEELLQKAPQNLTHSGQMIFVANSFLQYPPIVEKVFGHCNTLAKNNKFRIYSAQK</sequence>